<proteinExistence type="inferred from homology"/>
<sequence>MKRYVFMLSDGTGITAETLGNSLITQFENIQFEKITIPYIDSTHRAESVVLRINQCFSEQGTKPLVFMTLVDPEIRQAIKKAHACVFDLFSIFIGPLENELEEKSSYTVGRTHGVANVKSYSHRIEAIDFALSHDDGIKTRGYDKADIILIGVSRCGKTPSCLYMALQYGILAANYPFTEEDLVGFRLPDVLRPYKQKLFGLTIDAQRLQQIRSERRPNSKYASAEQCRLEVTEVEAMYQRENIPYINSTKYSIEEISTKVLAIAGLQRKI</sequence>
<accession>Q5WWF5</accession>
<keyword id="KW-0418">Kinase</keyword>
<keyword id="KW-0547">Nucleotide-binding</keyword>
<keyword id="KW-0723">Serine/threonine-protein kinase</keyword>
<keyword id="KW-0808">Transferase</keyword>
<comment type="function">
    <text evidence="1">Bifunctional serine/threonine kinase and phosphorylase involved in the regulation of the phosphoenolpyruvate synthase (PEPS) by catalyzing its phosphorylation/dephosphorylation.</text>
</comment>
<comment type="catalytic activity">
    <reaction evidence="1">
        <text>[pyruvate, water dikinase] + ADP = [pyruvate, water dikinase]-phosphate + AMP + H(+)</text>
        <dbReference type="Rhea" id="RHEA:46020"/>
        <dbReference type="Rhea" id="RHEA-COMP:11425"/>
        <dbReference type="Rhea" id="RHEA-COMP:11426"/>
        <dbReference type="ChEBI" id="CHEBI:15378"/>
        <dbReference type="ChEBI" id="CHEBI:43176"/>
        <dbReference type="ChEBI" id="CHEBI:68546"/>
        <dbReference type="ChEBI" id="CHEBI:456215"/>
        <dbReference type="ChEBI" id="CHEBI:456216"/>
        <dbReference type="EC" id="2.7.11.33"/>
    </reaction>
</comment>
<comment type="catalytic activity">
    <reaction evidence="1">
        <text>[pyruvate, water dikinase]-phosphate + phosphate + H(+) = [pyruvate, water dikinase] + diphosphate</text>
        <dbReference type="Rhea" id="RHEA:48580"/>
        <dbReference type="Rhea" id="RHEA-COMP:11425"/>
        <dbReference type="Rhea" id="RHEA-COMP:11426"/>
        <dbReference type="ChEBI" id="CHEBI:15378"/>
        <dbReference type="ChEBI" id="CHEBI:33019"/>
        <dbReference type="ChEBI" id="CHEBI:43176"/>
        <dbReference type="ChEBI" id="CHEBI:43474"/>
        <dbReference type="ChEBI" id="CHEBI:68546"/>
        <dbReference type="EC" id="2.7.4.28"/>
    </reaction>
</comment>
<comment type="similarity">
    <text evidence="1">Belongs to the pyruvate, phosphate/water dikinase regulatory protein family. PSRP subfamily.</text>
</comment>
<gene>
    <name type="ordered locus">lpl1498</name>
</gene>
<name>PSRP_LEGPL</name>
<reference key="1">
    <citation type="journal article" date="2004" name="Nat. Genet.">
        <title>Evidence in the Legionella pneumophila genome for exploitation of host cell functions and high genome plasticity.</title>
        <authorList>
            <person name="Cazalet C."/>
            <person name="Rusniok C."/>
            <person name="Brueggemann H."/>
            <person name="Zidane N."/>
            <person name="Magnier A."/>
            <person name="Ma L."/>
            <person name="Tichit M."/>
            <person name="Jarraud S."/>
            <person name="Bouchier C."/>
            <person name="Vandenesch F."/>
            <person name="Kunst F."/>
            <person name="Etienne J."/>
            <person name="Glaser P."/>
            <person name="Buchrieser C."/>
        </authorList>
    </citation>
    <scope>NUCLEOTIDE SEQUENCE [LARGE SCALE GENOMIC DNA]</scope>
    <source>
        <strain>Lens</strain>
    </source>
</reference>
<organism>
    <name type="scientific">Legionella pneumophila (strain Lens)</name>
    <dbReference type="NCBI Taxonomy" id="297245"/>
    <lineage>
        <taxon>Bacteria</taxon>
        <taxon>Pseudomonadati</taxon>
        <taxon>Pseudomonadota</taxon>
        <taxon>Gammaproteobacteria</taxon>
        <taxon>Legionellales</taxon>
        <taxon>Legionellaceae</taxon>
        <taxon>Legionella</taxon>
    </lineage>
</organism>
<dbReference type="EC" id="2.7.11.33" evidence="1"/>
<dbReference type="EC" id="2.7.4.28" evidence="1"/>
<dbReference type="EMBL" id="CR628337">
    <property type="protein sequence ID" value="CAH15738.1"/>
    <property type="molecule type" value="Genomic_DNA"/>
</dbReference>
<dbReference type="RefSeq" id="WP_011215545.1">
    <property type="nucleotide sequence ID" value="NC_006369.1"/>
</dbReference>
<dbReference type="SMR" id="Q5WWF5"/>
<dbReference type="KEGG" id="lpf:lpl1498"/>
<dbReference type="LegioList" id="lpl1498"/>
<dbReference type="HOGENOM" id="CLU_046206_1_0_6"/>
<dbReference type="Proteomes" id="UP000002517">
    <property type="component" value="Chromosome"/>
</dbReference>
<dbReference type="GO" id="GO:0043531">
    <property type="term" value="F:ADP binding"/>
    <property type="evidence" value="ECO:0007669"/>
    <property type="project" value="UniProtKB-UniRule"/>
</dbReference>
<dbReference type="GO" id="GO:0005524">
    <property type="term" value="F:ATP binding"/>
    <property type="evidence" value="ECO:0007669"/>
    <property type="project" value="InterPro"/>
</dbReference>
<dbReference type="GO" id="GO:0016776">
    <property type="term" value="F:phosphotransferase activity, phosphate group as acceptor"/>
    <property type="evidence" value="ECO:0007669"/>
    <property type="project" value="UniProtKB-UniRule"/>
</dbReference>
<dbReference type="GO" id="GO:0004674">
    <property type="term" value="F:protein serine/threonine kinase activity"/>
    <property type="evidence" value="ECO:0007669"/>
    <property type="project" value="UniProtKB-UniRule"/>
</dbReference>
<dbReference type="HAMAP" id="MF_01062">
    <property type="entry name" value="PSRP"/>
    <property type="match status" value="1"/>
</dbReference>
<dbReference type="InterPro" id="IPR005177">
    <property type="entry name" value="Kinase-pyrophosphorylase"/>
</dbReference>
<dbReference type="InterPro" id="IPR026530">
    <property type="entry name" value="PSRP"/>
</dbReference>
<dbReference type="NCBIfam" id="NF003742">
    <property type="entry name" value="PRK05339.1"/>
    <property type="match status" value="1"/>
</dbReference>
<dbReference type="PANTHER" id="PTHR31756">
    <property type="entry name" value="PYRUVATE, PHOSPHATE DIKINASE REGULATORY PROTEIN 1, CHLOROPLASTIC"/>
    <property type="match status" value="1"/>
</dbReference>
<dbReference type="PANTHER" id="PTHR31756:SF3">
    <property type="entry name" value="PYRUVATE, PHOSPHATE DIKINASE REGULATORY PROTEIN 1, CHLOROPLASTIC"/>
    <property type="match status" value="1"/>
</dbReference>
<dbReference type="Pfam" id="PF03618">
    <property type="entry name" value="Kinase-PPPase"/>
    <property type="match status" value="1"/>
</dbReference>
<protein>
    <recommendedName>
        <fullName evidence="1">Putative phosphoenolpyruvate synthase regulatory protein</fullName>
        <shortName evidence="1">PEP synthase regulatory protein</shortName>
        <shortName evidence="1">PSRP</shortName>
        <ecNumber evidence="1">2.7.11.33</ecNumber>
        <ecNumber evidence="1">2.7.4.28</ecNumber>
    </recommendedName>
    <alternativeName>
        <fullName evidence="1">Pyruvate, water dikinase regulatory protein</fullName>
    </alternativeName>
</protein>
<evidence type="ECO:0000255" key="1">
    <source>
        <dbReference type="HAMAP-Rule" id="MF_01062"/>
    </source>
</evidence>
<feature type="chain" id="PRO_0000196668" description="Putative phosphoenolpyruvate synthase regulatory protein">
    <location>
        <begin position="1"/>
        <end position="271"/>
    </location>
</feature>
<feature type="binding site" evidence="1">
    <location>
        <begin position="152"/>
        <end position="159"/>
    </location>
    <ligand>
        <name>ADP</name>
        <dbReference type="ChEBI" id="CHEBI:456216"/>
    </ligand>
</feature>